<evidence type="ECO:0000255" key="1">
    <source>
        <dbReference type="HAMAP-Rule" id="MF_00210"/>
    </source>
</evidence>
<evidence type="ECO:0000256" key="2">
    <source>
        <dbReference type="SAM" id="MobiDB-lite"/>
    </source>
</evidence>
<organism>
    <name type="scientific">Cereibacter sphaeroides (strain ATCC 17029 / ATH 2.4.9)</name>
    <name type="common">Rhodobacter sphaeroides</name>
    <dbReference type="NCBI Taxonomy" id="349101"/>
    <lineage>
        <taxon>Bacteria</taxon>
        <taxon>Pseudomonadati</taxon>
        <taxon>Pseudomonadota</taxon>
        <taxon>Alphaproteobacteria</taxon>
        <taxon>Rhodobacterales</taxon>
        <taxon>Paracoccaceae</taxon>
        <taxon>Cereibacter</taxon>
    </lineage>
</organism>
<protein>
    <recommendedName>
        <fullName evidence="1">3-phosphoshikimate 1-carboxyvinyltransferase</fullName>
        <ecNumber evidence="1">2.5.1.19</ecNumber>
    </recommendedName>
    <alternativeName>
        <fullName evidence="1">5-enolpyruvylshikimate-3-phosphate synthase</fullName>
        <shortName evidence="1">EPSP synthase</shortName>
        <shortName evidence="1">EPSPS</shortName>
    </alternativeName>
</protein>
<feature type="chain" id="PRO_1000058612" description="3-phosphoshikimate 1-carboxyvinyltransferase">
    <location>
        <begin position="1"/>
        <end position="445"/>
    </location>
</feature>
<feature type="region of interest" description="Disordered" evidence="2">
    <location>
        <begin position="1"/>
        <end position="25"/>
    </location>
</feature>
<feature type="active site" description="Proton acceptor" evidence="1">
    <location>
        <position position="326"/>
    </location>
</feature>
<feature type="binding site" evidence="1">
    <location>
        <position position="28"/>
    </location>
    <ligand>
        <name>3-phosphoshikimate</name>
        <dbReference type="ChEBI" id="CHEBI:145989"/>
    </ligand>
</feature>
<feature type="binding site" evidence="1">
    <location>
        <position position="28"/>
    </location>
    <ligand>
        <name>phosphoenolpyruvate</name>
        <dbReference type="ChEBI" id="CHEBI:58702"/>
    </ligand>
</feature>
<feature type="binding site" evidence="1">
    <location>
        <position position="29"/>
    </location>
    <ligand>
        <name>3-phosphoshikimate</name>
        <dbReference type="ChEBI" id="CHEBI:145989"/>
    </ligand>
</feature>
<feature type="binding site" evidence="1">
    <location>
        <position position="33"/>
    </location>
    <ligand>
        <name>3-phosphoshikimate</name>
        <dbReference type="ChEBI" id="CHEBI:145989"/>
    </ligand>
</feature>
<feature type="binding site" evidence="1">
    <location>
        <position position="101"/>
    </location>
    <ligand>
        <name>phosphoenolpyruvate</name>
        <dbReference type="ChEBI" id="CHEBI:58702"/>
    </ligand>
</feature>
<feature type="binding site" evidence="1">
    <location>
        <position position="129"/>
    </location>
    <ligand>
        <name>phosphoenolpyruvate</name>
        <dbReference type="ChEBI" id="CHEBI:58702"/>
    </ligand>
</feature>
<feature type="binding site" evidence="1">
    <location>
        <position position="174"/>
    </location>
    <ligand>
        <name>3-phosphoshikimate</name>
        <dbReference type="ChEBI" id="CHEBI:145989"/>
    </ligand>
</feature>
<feature type="binding site" evidence="1">
    <location>
        <position position="176"/>
    </location>
    <ligand>
        <name>3-phosphoshikimate</name>
        <dbReference type="ChEBI" id="CHEBI:145989"/>
    </ligand>
</feature>
<feature type="binding site" evidence="1">
    <location>
        <position position="176"/>
    </location>
    <ligand>
        <name>phosphoenolpyruvate</name>
        <dbReference type="ChEBI" id="CHEBI:58702"/>
    </ligand>
</feature>
<feature type="binding site" evidence="1">
    <location>
        <position position="326"/>
    </location>
    <ligand>
        <name>3-phosphoshikimate</name>
        <dbReference type="ChEBI" id="CHEBI:145989"/>
    </ligand>
</feature>
<feature type="binding site" evidence="1">
    <location>
        <position position="353"/>
    </location>
    <ligand>
        <name>3-phosphoshikimate</name>
        <dbReference type="ChEBI" id="CHEBI:145989"/>
    </ligand>
</feature>
<feature type="binding site" evidence="1">
    <location>
        <position position="357"/>
    </location>
    <ligand>
        <name>phosphoenolpyruvate</name>
        <dbReference type="ChEBI" id="CHEBI:58702"/>
    </ligand>
</feature>
<feature type="binding site" evidence="1">
    <location>
        <position position="400"/>
    </location>
    <ligand>
        <name>phosphoenolpyruvate</name>
        <dbReference type="ChEBI" id="CHEBI:58702"/>
    </ligand>
</feature>
<reference key="1">
    <citation type="submission" date="2007-02" db="EMBL/GenBank/DDBJ databases">
        <title>Complete sequence of chromosome 2 of Rhodobacter sphaeroides ATCC 17029.</title>
        <authorList>
            <person name="Copeland A."/>
            <person name="Lucas S."/>
            <person name="Lapidus A."/>
            <person name="Barry K."/>
            <person name="Detter J.C."/>
            <person name="Glavina del Rio T."/>
            <person name="Hammon N."/>
            <person name="Israni S."/>
            <person name="Dalin E."/>
            <person name="Tice H."/>
            <person name="Pitluck S."/>
            <person name="Kiss H."/>
            <person name="Brettin T."/>
            <person name="Bruce D."/>
            <person name="Han C."/>
            <person name="Tapia R."/>
            <person name="Gilna P."/>
            <person name="Schmutz J."/>
            <person name="Larimer F."/>
            <person name="Land M."/>
            <person name="Hauser L."/>
            <person name="Kyrpides N."/>
            <person name="Mikhailova N."/>
            <person name="Richardson P."/>
            <person name="Mackenzie C."/>
            <person name="Choudhary M."/>
            <person name="Donohue T.J."/>
            <person name="Kaplan S."/>
        </authorList>
    </citation>
    <scope>NUCLEOTIDE SEQUENCE [LARGE SCALE GENOMIC DNA]</scope>
    <source>
        <strain>ATCC 17029 / ATH 2.4.9</strain>
    </source>
</reference>
<gene>
    <name evidence="1" type="primary">aroA</name>
    <name type="ordered locus">Rsph17029_3277</name>
</gene>
<keyword id="KW-0028">Amino-acid biosynthesis</keyword>
<keyword id="KW-0057">Aromatic amino acid biosynthesis</keyword>
<keyword id="KW-0963">Cytoplasm</keyword>
<keyword id="KW-0808">Transferase</keyword>
<accession>A3PPV7</accession>
<dbReference type="EC" id="2.5.1.19" evidence="1"/>
<dbReference type="EMBL" id="CP000578">
    <property type="protein sequence ID" value="ABN78373.1"/>
    <property type="molecule type" value="Genomic_DNA"/>
</dbReference>
<dbReference type="RefSeq" id="WP_011842229.1">
    <property type="nucleotide sequence ID" value="NC_009050.1"/>
</dbReference>
<dbReference type="SMR" id="A3PPV7"/>
<dbReference type="KEGG" id="rsh:Rsph17029_3277"/>
<dbReference type="HOGENOM" id="CLU_024321_0_1_5"/>
<dbReference type="UniPathway" id="UPA00053">
    <property type="reaction ID" value="UER00089"/>
</dbReference>
<dbReference type="GO" id="GO:0005737">
    <property type="term" value="C:cytoplasm"/>
    <property type="evidence" value="ECO:0007669"/>
    <property type="project" value="UniProtKB-SubCell"/>
</dbReference>
<dbReference type="GO" id="GO:0003866">
    <property type="term" value="F:3-phosphoshikimate 1-carboxyvinyltransferase activity"/>
    <property type="evidence" value="ECO:0007669"/>
    <property type="project" value="UniProtKB-UniRule"/>
</dbReference>
<dbReference type="GO" id="GO:0008652">
    <property type="term" value="P:amino acid biosynthetic process"/>
    <property type="evidence" value="ECO:0007669"/>
    <property type="project" value="UniProtKB-KW"/>
</dbReference>
<dbReference type="GO" id="GO:0009073">
    <property type="term" value="P:aromatic amino acid family biosynthetic process"/>
    <property type="evidence" value="ECO:0007669"/>
    <property type="project" value="UniProtKB-KW"/>
</dbReference>
<dbReference type="GO" id="GO:0009423">
    <property type="term" value="P:chorismate biosynthetic process"/>
    <property type="evidence" value="ECO:0007669"/>
    <property type="project" value="UniProtKB-UniRule"/>
</dbReference>
<dbReference type="CDD" id="cd01556">
    <property type="entry name" value="EPSP_synthase"/>
    <property type="match status" value="1"/>
</dbReference>
<dbReference type="FunFam" id="3.65.10.10:FF:000005">
    <property type="entry name" value="3-phosphoshikimate 1-carboxyvinyltransferase"/>
    <property type="match status" value="1"/>
</dbReference>
<dbReference type="Gene3D" id="3.65.10.10">
    <property type="entry name" value="Enolpyruvate transferase domain"/>
    <property type="match status" value="2"/>
</dbReference>
<dbReference type="HAMAP" id="MF_00210">
    <property type="entry name" value="EPSP_synth"/>
    <property type="match status" value="1"/>
</dbReference>
<dbReference type="InterPro" id="IPR001986">
    <property type="entry name" value="Enolpyruvate_Tfrase_dom"/>
</dbReference>
<dbReference type="InterPro" id="IPR036968">
    <property type="entry name" value="Enolpyruvate_Tfrase_sf"/>
</dbReference>
<dbReference type="InterPro" id="IPR006264">
    <property type="entry name" value="EPSP_synthase"/>
</dbReference>
<dbReference type="InterPro" id="IPR023193">
    <property type="entry name" value="EPSP_synthase_CS"/>
</dbReference>
<dbReference type="InterPro" id="IPR013792">
    <property type="entry name" value="RNA3'P_cycl/enolpyr_Trfase_a/b"/>
</dbReference>
<dbReference type="NCBIfam" id="TIGR01356">
    <property type="entry name" value="aroA"/>
    <property type="match status" value="1"/>
</dbReference>
<dbReference type="PANTHER" id="PTHR21090">
    <property type="entry name" value="AROM/DEHYDROQUINATE SYNTHASE"/>
    <property type="match status" value="1"/>
</dbReference>
<dbReference type="PANTHER" id="PTHR21090:SF5">
    <property type="entry name" value="PENTAFUNCTIONAL AROM POLYPEPTIDE"/>
    <property type="match status" value="1"/>
</dbReference>
<dbReference type="Pfam" id="PF00275">
    <property type="entry name" value="EPSP_synthase"/>
    <property type="match status" value="1"/>
</dbReference>
<dbReference type="PIRSF" id="PIRSF000505">
    <property type="entry name" value="EPSPS"/>
    <property type="match status" value="1"/>
</dbReference>
<dbReference type="SUPFAM" id="SSF55205">
    <property type="entry name" value="EPT/RTPC-like"/>
    <property type="match status" value="1"/>
</dbReference>
<dbReference type="PROSITE" id="PS00104">
    <property type="entry name" value="EPSP_SYNTHASE_1"/>
    <property type="match status" value="1"/>
</dbReference>
<dbReference type="PROSITE" id="PS00885">
    <property type="entry name" value="EPSP_SYNTHASE_2"/>
    <property type="match status" value="1"/>
</dbReference>
<proteinExistence type="inferred from homology"/>
<name>AROA_CERS1</name>
<sequence length="445" mass="46307">MSGHGPAQPMTARRSGPLKGRAEIPGDKSISHRALILGAMAVGETQITGLLEGQDVLDTAKAMRAFGAEVIQHGPGAWSVHGVGVGGFAEPAEVIDCGNSGTGVRLVMGAMATSPLTATFTGDASLRKRPMGRVTDPLALFGTRAYGRKGGRLPMTLVGAADPVPVRYTVPMPSAQVKSAVLLAGLNAPGQTVVIEREATRDHSERMLRGFGAELSVETGPEGQIITLTGQPELRPQTVAVPRDPSSAAFPVCAALIVEGSEILVPGVSRNPTRDGLYVTLLEMGADIAFENEREEGGEPVADLRVRASALKGVEVPPERAPSMIDEYPILSVVAAFAEGSTIMRGVKELRVKESDRIDAMARGLEACGVRIEEDEDTLIVHGMGRVPGGATCATHLDHRIAMSFLVLGMAAEAPVTVDDGSPIATSFPAFTDLMTGLGADLAAG</sequence>
<comment type="function">
    <text evidence="1">Catalyzes the transfer of the enolpyruvyl moiety of phosphoenolpyruvate (PEP) to the 5-hydroxyl of shikimate-3-phosphate (S3P) to produce enolpyruvyl shikimate-3-phosphate and inorganic phosphate.</text>
</comment>
<comment type="catalytic activity">
    <reaction evidence="1">
        <text>3-phosphoshikimate + phosphoenolpyruvate = 5-O-(1-carboxyvinyl)-3-phosphoshikimate + phosphate</text>
        <dbReference type="Rhea" id="RHEA:21256"/>
        <dbReference type="ChEBI" id="CHEBI:43474"/>
        <dbReference type="ChEBI" id="CHEBI:57701"/>
        <dbReference type="ChEBI" id="CHEBI:58702"/>
        <dbReference type="ChEBI" id="CHEBI:145989"/>
        <dbReference type="EC" id="2.5.1.19"/>
    </reaction>
    <physiologicalReaction direction="left-to-right" evidence="1">
        <dbReference type="Rhea" id="RHEA:21257"/>
    </physiologicalReaction>
</comment>
<comment type="pathway">
    <text evidence="1">Metabolic intermediate biosynthesis; chorismate biosynthesis; chorismate from D-erythrose 4-phosphate and phosphoenolpyruvate: step 6/7.</text>
</comment>
<comment type="subunit">
    <text evidence="1">Monomer.</text>
</comment>
<comment type="subcellular location">
    <subcellularLocation>
        <location evidence="1">Cytoplasm</location>
    </subcellularLocation>
</comment>
<comment type="similarity">
    <text evidence="1">Belongs to the EPSP synthase family.</text>
</comment>